<gene>
    <name type="primary">copA</name>
    <name type="ordered locus">jhp_0353</name>
</gene>
<dbReference type="EC" id="7.2.2.9"/>
<dbReference type="EMBL" id="AE001439">
    <property type="protein sequence ID" value="AAD05935.1"/>
    <property type="molecule type" value="Genomic_DNA"/>
</dbReference>
<dbReference type="PIR" id="A71941">
    <property type="entry name" value="A71941"/>
</dbReference>
<dbReference type="RefSeq" id="WP_000664983.1">
    <property type="nucleotide sequence ID" value="NC_000921.1"/>
</dbReference>
<dbReference type="SMR" id="Q9ZM69"/>
<dbReference type="KEGG" id="hpj:jhp_0353"/>
<dbReference type="PATRIC" id="fig|85963.30.peg.658"/>
<dbReference type="eggNOG" id="COG2217">
    <property type="taxonomic scope" value="Bacteria"/>
</dbReference>
<dbReference type="Proteomes" id="UP000000804">
    <property type="component" value="Chromosome"/>
</dbReference>
<dbReference type="GO" id="GO:0005886">
    <property type="term" value="C:plasma membrane"/>
    <property type="evidence" value="ECO:0007669"/>
    <property type="project" value="UniProtKB-SubCell"/>
</dbReference>
<dbReference type="GO" id="GO:0005524">
    <property type="term" value="F:ATP binding"/>
    <property type="evidence" value="ECO:0007669"/>
    <property type="project" value="UniProtKB-KW"/>
</dbReference>
<dbReference type="GO" id="GO:0016887">
    <property type="term" value="F:ATP hydrolysis activity"/>
    <property type="evidence" value="ECO:0007669"/>
    <property type="project" value="InterPro"/>
</dbReference>
<dbReference type="GO" id="GO:0005507">
    <property type="term" value="F:copper ion binding"/>
    <property type="evidence" value="ECO:0007669"/>
    <property type="project" value="TreeGrafter"/>
</dbReference>
<dbReference type="GO" id="GO:0043682">
    <property type="term" value="F:P-type divalent copper transporter activity"/>
    <property type="evidence" value="ECO:0007669"/>
    <property type="project" value="UniProtKB-EC"/>
</dbReference>
<dbReference type="GO" id="GO:0055070">
    <property type="term" value="P:copper ion homeostasis"/>
    <property type="evidence" value="ECO:0007669"/>
    <property type="project" value="TreeGrafter"/>
</dbReference>
<dbReference type="CDD" id="cd00371">
    <property type="entry name" value="HMA"/>
    <property type="match status" value="1"/>
</dbReference>
<dbReference type="CDD" id="cd02094">
    <property type="entry name" value="P-type_ATPase_Cu-like"/>
    <property type="match status" value="1"/>
</dbReference>
<dbReference type="FunFam" id="3.30.70.100:FF:000001">
    <property type="entry name" value="ATPase copper transporting beta"/>
    <property type="match status" value="1"/>
</dbReference>
<dbReference type="FunFam" id="2.70.150.10:FF:000020">
    <property type="entry name" value="Copper-exporting P-type ATPase A"/>
    <property type="match status" value="1"/>
</dbReference>
<dbReference type="Gene3D" id="3.30.70.100">
    <property type="match status" value="1"/>
</dbReference>
<dbReference type="Gene3D" id="3.40.1110.10">
    <property type="entry name" value="Calcium-transporting ATPase, cytoplasmic domain N"/>
    <property type="match status" value="1"/>
</dbReference>
<dbReference type="Gene3D" id="2.70.150.10">
    <property type="entry name" value="Calcium-transporting ATPase, cytoplasmic transduction domain A"/>
    <property type="match status" value="1"/>
</dbReference>
<dbReference type="Gene3D" id="3.40.50.1000">
    <property type="entry name" value="HAD superfamily/HAD-like"/>
    <property type="match status" value="1"/>
</dbReference>
<dbReference type="InterPro" id="IPR023299">
    <property type="entry name" value="ATPase_P-typ_cyto_dom_N"/>
</dbReference>
<dbReference type="InterPro" id="IPR018303">
    <property type="entry name" value="ATPase_P-typ_P_site"/>
</dbReference>
<dbReference type="InterPro" id="IPR023298">
    <property type="entry name" value="ATPase_P-typ_TM_dom_sf"/>
</dbReference>
<dbReference type="InterPro" id="IPR008250">
    <property type="entry name" value="ATPase_P-typ_transduc_dom_A_sf"/>
</dbReference>
<dbReference type="InterPro" id="IPR036412">
    <property type="entry name" value="HAD-like_sf"/>
</dbReference>
<dbReference type="InterPro" id="IPR023214">
    <property type="entry name" value="HAD_sf"/>
</dbReference>
<dbReference type="InterPro" id="IPR017969">
    <property type="entry name" value="Heavy-metal-associated_CS"/>
</dbReference>
<dbReference type="InterPro" id="IPR006121">
    <property type="entry name" value="HMA_dom"/>
</dbReference>
<dbReference type="InterPro" id="IPR036163">
    <property type="entry name" value="HMA_dom_sf"/>
</dbReference>
<dbReference type="InterPro" id="IPR027256">
    <property type="entry name" value="P-typ_ATPase_IB"/>
</dbReference>
<dbReference type="InterPro" id="IPR001757">
    <property type="entry name" value="P_typ_ATPase"/>
</dbReference>
<dbReference type="InterPro" id="IPR044492">
    <property type="entry name" value="P_typ_ATPase_HD_dom"/>
</dbReference>
<dbReference type="NCBIfam" id="TIGR01511">
    <property type="entry name" value="ATPase-IB1_Cu"/>
    <property type="match status" value="1"/>
</dbReference>
<dbReference type="NCBIfam" id="TIGR01525">
    <property type="entry name" value="ATPase-IB_hvy"/>
    <property type="match status" value="1"/>
</dbReference>
<dbReference type="NCBIfam" id="TIGR01494">
    <property type="entry name" value="ATPase_P-type"/>
    <property type="match status" value="1"/>
</dbReference>
<dbReference type="PANTHER" id="PTHR43520">
    <property type="entry name" value="ATP7, ISOFORM B"/>
    <property type="match status" value="1"/>
</dbReference>
<dbReference type="PANTHER" id="PTHR43520:SF8">
    <property type="entry name" value="P-TYPE CU(+) TRANSPORTER"/>
    <property type="match status" value="1"/>
</dbReference>
<dbReference type="Pfam" id="PF00122">
    <property type="entry name" value="E1-E2_ATPase"/>
    <property type="match status" value="1"/>
</dbReference>
<dbReference type="Pfam" id="PF00403">
    <property type="entry name" value="HMA"/>
    <property type="match status" value="1"/>
</dbReference>
<dbReference type="Pfam" id="PF00702">
    <property type="entry name" value="Hydrolase"/>
    <property type="match status" value="1"/>
</dbReference>
<dbReference type="PRINTS" id="PR00119">
    <property type="entry name" value="CATATPASE"/>
</dbReference>
<dbReference type="PRINTS" id="PR00943">
    <property type="entry name" value="CUATPASE"/>
</dbReference>
<dbReference type="SFLD" id="SFLDG00002">
    <property type="entry name" value="C1.7:_P-type_atpase_like"/>
    <property type="match status" value="1"/>
</dbReference>
<dbReference type="SFLD" id="SFLDF00027">
    <property type="entry name" value="p-type_atpase"/>
    <property type="match status" value="1"/>
</dbReference>
<dbReference type="SUPFAM" id="SSF81653">
    <property type="entry name" value="Calcium ATPase, transduction domain A"/>
    <property type="match status" value="1"/>
</dbReference>
<dbReference type="SUPFAM" id="SSF81665">
    <property type="entry name" value="Calcium ATPase, transmembrane domain M"/>
    <property type="match status" value="1"/>
</dbReference>
<dbReference type="SUPFAM" id="SSF56784">
    <property type="entry name" value="HAD-like"/>
    <property type="match status" value="1"/>
</dbReference>
<dbReference type="SUPFAM" id="SSF55008">
    <property type="entry name" value="HMA, heavy metal-associated domain"/>
    <property type="match status" value="1"/>
</dbReference>
<dbReference type="PROSITE" id="PS00154">
    <property type="entry name" value="ATPASE_E1_E2"/>
    <property type="match status" value="1"/>
</dbReference>
<dbReference type="PROSITE" id="PS01047">
    <property type="entry name" value="HMA_1"/>
    <property type="match status" value="1"/>
</dbReference>
<dbReference type="PROSITE" id="PS50846">
    <property type="entry name" value="HMA_2"/>
    <property type="match status" value="1"/>
</dbReference>
<sequence>MKESFYIEGMTCTACSSGIERSLGRKSFVKKIEVSLLNKSANIEFNENETNLDEIFKLIEKLGYSPKKTLAEEKKEFFSPNVKLALAVIFTLFVVYLSMGAMLSPSLLPESLLTINHHSNFLNACLQLIGALIVMHLGRDFYIQGFKALWHRQPNMSSLIAIGTSAALISSLWQLYLVYTNHYTDQWSYGHYYFESVCVILMFVMVGKRIENVSKDKALDAMQALMKNAPKTALKMHNNQQIEVLVDSIVVGDILKVLPGSAIAVDGEIIEGEGELDESMLSGEALPVYKKVGDKVFSGTLNSNTSFLMKATQDNKNSTLSQIIEMIHNAQSSKAEISRLADKVSSVFVPSVIAIAVLAFVVWLIIAPKPDFWWNFRTALEVFVSVLVISCPCALGLATPMSILVANQKASSLGLFFKDAKSLEKARLVNTIVFDKTGTLTNGKPVVKSIHSNIELLELLSLASSIEKSSEHVIAKGIVEYAKERNAPLKDISEVKVKTGFGISAKVDYQGAKEIIKVGNSEFFNPINTLEIKENGILVFVGRAINEKEDELLGAFVLEDLPKKGVKEHIAQIKNLGINTFLLSGDNRENVKKCALELGIDGYISNAKPQDKLNKIKELKEKGRIVMMVGDGLNDAPSLAMSDVAVVMAKGSDVSVQAADIVSFNNDIKSVYSAIKLSQATIKNIKENLFWAFCYNSVFIPLACGVLYKANIMLSPAIAGLAMSLSSVSVVLNSQRLRNFKIKDH</sequence>
<evidence type="ECO:0000250" key="1"/>
<evidence type="ECO:0000255" key="2"/>
<evidence type="ECO:0000255" key="3">
    <source>
        <dbReference type="PROSITE-ProRule" id="PRU00280"/>
    </source>
</evidence>
<evidence type="ECO:0000305" key="4"/>
<feature type="chain" id="PRO_0000046174" description="Copper-transporting ATPase">
    <location>
        <begin position="1"/>
        <end position="745"/>
    </location>
</feature>
<feature type="topological domain" description="Cytoplasmic" evidence="2">
    <location>
        <begin position="1"/>
        <end position="83"/>
    </location>
</feature>
<feature type="transmembrane region" description="Helical" evidence="2">
    <location>
        <begin position="84"/>
        <end position="104"/>
    </location>
</feature>
<feature type="topological domain" description="Extracellular" evidence="2">
    <location>
        <begin position="105"/>
        <end position="124"/>
    </location>
</feature>
<feature type="transmembrane region" description="Helical" evidence="2">
    <location>
        <begin position="125"/>
        <end position="144"/>
    </location>
</feature>
<feature type="topological domain" description="Cytoplasmic" evidence="2">
    <location>
        <begin position="145"/>
        <end position="151"/>
    </location>
</feature>
<feature type="transmembrane region" description="Helical" evidence="2">
    <location>
        <begin position="152"/>
        <end position="172"/>
    </location>
</feature>
<feature type="topological domain" description="Extracellular" evidence="2">
    <location>
        <begin position="173"/>
        <end position="194"/>
    </location>
</feature>
<feature type="transmembrane region" description="Helical" evidence="2">
    <location>
        <begin position="195"/>
        <end position="215"/>
    </location>
</feature>
<feature type="topological domain" description="Cytoplasmic" evidence="2">
    <location>
        <begin position="216"/>
        <end position="343"/>
    </location>
</feature>
<feature type="transmembrane region" description="Helical" evidence="2">
    <location>
        <begin position="344"/>
        <end position="366"/>
    </location>
</feature>
<feature type="topological domain" description="Extracellular" evidence="2">
    <location>
        <begin position="367"/>
        <end position="379"/>
    </location>
</feature>
<feature type="transmembrane region" description="Helical" evidence="2">
    <location>
        <begin position="380"/>
        <end position="397"/>
    </location>
</feature>
<feature type="topological domain" description="Cytoplasmic" evidence="2">
    <location>
        <begin position="398"/>
        <end position="685"/>
    </location>
</feature>
<feature type="transmembrane region" description="Helical" evidence="2">
    <location>
        <begin position="686"/>
        <end position="705"/>
    </location>
</feature>
<feature type="topological domain" description="Extracellular" evidence="2">
    <location>
        <begin position="706"/>
        <end position="716"/>
    </location>
</feature>
<feature type="transmembrane region" description="Helical" evidence="2">
    <location>
        <begin position="717"/>
        <end position="735"/>
    </location>
</feature>
<feature type="topological domain" description="Cytoplasmic" evidence="2">
    <location>
        <begin position="736"/>
        <end position="745"/>
    </location>
</feature>
<feature type="domain" description="HMA" evidence="3">
    <location>
        <begin position="1"/>
        <end position="67"/>
    </location>
</feature>
<feature type="active site" description="4-aspartylphosphate intermediate" evidence="1">
    <location>
        <position position="435"/>
    </location>
</feature>
<feature type="binding site" evidence="3">
    <location>
        <position position="12"/>
    </location>
    <ligand>
        <name>Cu cation</name>
        <dbReference type="ChEBI" id="CHEBI:23378"/>
    </ligand>
</feature>
<feature type="binding site" evidence="3">
    <location>
        <position position="15"/>
    </location>
    <ligand>
        <name>Cu cation</name>
        <dbReference type="ChEBI" id="CHEBI:23378"/>
    </ligand>
</feature>
<feature type="binding site">
    <location>
        <position position="631"/>
    </location>
    <ligand>
        <name>Mg(2+)</name>
        <dbReference type="ChEBI" id="CHEBI:18420"/>
    </ligand>
</feature>
<feature type="binding site">
    <location>
        <position position="635"/>
    </location>
    <ligand>
        <name>Mg(2+)</name>
        <dbReference type="ChEBI" id="CHEBI:18420"/>
    </ligand>
</feature>
<protein>
    <recommendedName>
        <fullName>Copper-transporting ATPase</fullName>
        <ecNumber>7.2.2.9</ecNumber>
    </recommendedName>
</protein>
<comment type="function">
    <text>Probably involved in copper export.</text>
</comment>
<comment type="catalytic activity">
    <reaction>
        <text>Cu(2+)(in) + ATP + H2O = Cu(2+)(out) + ADP + phosphate + H(+)</text>
        <dbReference type="Rhea" id="RHEA:10376"/>
        <dbReference type="ChEBI" id="CHEBI:15377"/>
        <dbReference type="ChEBI" id="CHEBI:15378"/>
        <dbReference type="ChEBI" id="CHEBI:29036"/>
        <dbReference type="ChEBI" id="CHEBI:30616"/>
        <dbReference type="ChEBI" id="CHEBI:43474"/>
        <dbReference type="ChEBI" id="CHEBI:456216"/>
        <dbReference type="EC" id="7.2.2.9"/>
    </reaction>
</comment>
<comment type="subcellular location">
    <subcellularLocation>
        <location>Cell membrane</location>
        <topology>Multi-pass membrane protein</topology>
    </subcellularLocation>
</comment>
<comment type="similarity">
    <text evidence="4">Belongs to the cation transport ATPase (P-type) (TC 3.A.3) family. Type IB subfamily.</text>
</comment>
<reference key="1">
    <citation type="journal article" date="1999" name="Nature">
        <title>Genomic sequence comparison of two unrelated isolates of the human gastric pathogen Helicobacter pylori.</title>
        <authorList>
            <person name="Alm R.A."/>
            <person name="Ling L.-S.L."/>
            <person name="Moir D.T."/>
            <person name="King B.L."/>
            <person name="Brown E.D."/>
            <person name="Doig P.C."/>
            <person name="Smith D.R."/>
            <person name="Noonan B."/>
            <person name="Guild B.C."/>
            <person name="deJonge B.L."/>
            <person name="Carmel G."/>
            <person name="Tummino P.J."/>
            <person name="Caruso A."/>
            <person name="Uria-Nickelsen M."/>
            <person name="Mills D.M."/>
            <person name="Ives C."/>
            <person name="Gibson R."/>
            <person name="Merberg D."/>
            <person name="Mills S.D."/>
            <person name="Jiang Q."/>
            <person name="Taylor D.E."/>
            <person name="Vovis G.F."/>
            <person name="Trust T.J."/>
        </authorList>
    </citation>
    <scope>NUCLEOTIDE SEQUENCE [LARGE SCALE GENOMIC DNA]</scope>
    <source>
        <strain>J99 / ATCC 700824</strain>
    </source>
</reference>
<keyword id="KW-0067">ATP-binding</keyword>
<keyword id="KW-1003">Cell membrane</keyword>
<keyword id="KW-0186">Copper</keyword>
<keyword id="KW-0187">Copper transport</keyword>
<keyword id="KW-0406">Ion transport</keyword>
<keyword id="KW-0460">Magnesium</keyword>
<keyword id="KW-0472">Membrane</keyword>
<keyword id="KW-0479">Metal-binding</keyword>
<keyword id="KW-0547">Nucleotide-binding</keyword>
<keyword id="KW-0597">Phosphoprotein</keyword>
<keyword id="KW-1278">Translocase</keyword>
<keyword id="KW-0812">Transmembrane</keyword>
<keyword id="KW-1133">Transmembrane helix</keyword>
<keyword id="KW-0813">Transport</keyword>
<name>COPA_HELPJ</name>
<accession>Q9ZM69</accession>
<proteinExistence type="inferred from homology"/>
<organism>
    <name type="scientific">Helicobacter pylori (strain J99 / ATCC 700824)</name>
    <name type="common">Campylobacter pylori J99</name>
    <dbReference type="NCBI Taxonomy" id="85963"/>
    <lineage>
        <taxon>Bacteria</taxon>
        <taxon>Pseudomonadati</taxon>
        <taxon>Campylobacterota</taxon>
        <taxon>Epsilonproteobacteria</taxon>
        <taxon>Campylobacterales</taxon>
        <taxon>Helicobacteraceae</taxon>
        <taxon>Helicobacter</taxon>
    </lineage>
</organism>